<reference key="1">
    <citation type="submission" date="2006-06" db="EMBL/GenBank/DDBJ databases">
        <authorList>
            <consortium name="NIH - Mammalian Gene Collection (MGC) project"/>
        </authorList>
    </citation>
    <scope>NUCLEOTIDE SEQUENCE [LARGE SCALE MRNA]</scope>
    <source>
        <strain>Hereford</strain>
        <tissue>Fetal pons</tissue>
    </source>
</reference>
<keyword id="KW-0966">Cell projection</keyword>
<keyword id="KW-0969">Cilium</keyword>
<keyword id="KW-0175">Coiled coil</keyword>
<keyword id="KW-0963">Cytoplasm</keyword>
<keyword id="KW-0206">Cytoskeleton</keyword>
<keyword id="KW-0597">Phosphoprotein</keyword>
<keyword id="KW-0653">Protein transport</keyword>
<keyword id="KW-1185">Reference proteome</keyword>
<keyword id="KW-0702">S-nitrosylation</keyword>
<keyword id="KW-0813">Transport</keyword>
<gene>
    <name type="primary">RILPL1</name>
</gene>
<evidence type="ECO:0000250" key="1"/>
<evidence type="ECO:0000250" key="2">
    <source>
        <dbReference type="UniProtKB" id="D3ZUQ0"/>
    </source>
</evidence>
<evidence type="ECO:0000250" key="3">
    <source>
        <dbReference type="UniProtKB" id="Q5EBL4"/>
    </source>
</evidence>
<evidence type="ECO:0000250" key="4">
    <source>
        <dbReference type="UniProtKB" id="Q9JJC6"/>
    </source>
</evidence>
<evidence type="ECO:0000255" key="5"/>
<evidence type="ECO:0000255" key="6">
    <source>
        <dbReference type="PROSITE-ProRule" id="PRU01112"/>
    </source>
</evidence>
<evidence type="ECO:0000255" key="7">
    <source>
        <dbReference type="PROSITE-ProRule" id="PRU01113"/>
    </source>
</evidence>
<evidence type="ECO:0000256" key="8">
    <source>
        <dbReference type="SAM" id="MobiDB-lite"/>
    </source>
</evidence>
<evidence type="ECO:0000305" key="9"/>
<sequence>MEEDRGSALAAESALEKNVAELTVMDVYDIASLVGHEFERVIDQHGCEAIARLIPKVVRVLEILEVLVSRHHVAPELDELRLELDRLRLERMDRIEKERKHQKELELVEDVWRGEAQDLLSQIAQLQEENKQLMTNLSHKDVSFSEEEFQKHEGMSERERQVMKKLKEVVDKQRDEIRAKDRELGLKNEDVEALQQQQTRLMKINHDLRHRVTVVEAQGKALIEQKVELEADLQTKEQEMGSLRAELGKLRERLQGELNQNGEEEPVAELGGEECVSEAEKVAMDLKDPNRPRFTLQELRDVLHERNELKSKVFLLQEELAYYKSEEIEEENQIPQPPPIAHPRMSPQPESGIKRLFSFFSRDKKRLANTQRNVRIHETFGQWANCHRDDGYTEQGQEALQHL</sequence>
<proteinExistence type="evidence at transcript level"/>
<name>RIPL1_BOVIN</name>
<protein>
    <recommendedName>
        <fullName>RILP-like protein 1</fullName>
    </recommendedName>
    <alternativeName>
        <fullName>Rab-interacting lysosomal-like protein 1</fullName>
    </alternativeName>
</protein>
<organism>
    <name type="scientific">Bos taurus</name>
    <name type="common">Bovine</name>
    <dbReference type="NCBI Taxonomy" id="9913"/>
    <lineage>
        <taxon>Eukaryota</taxon>
        <taxon>Metazoa</taxon>
        <taxon>Chordata</taxon>
        <taxon>Craniata</taxon>
        <taxon>Vertebrata</taxon>
        <taxon>Euteleostomi</taxon>
        <taxon>Mammalia</taxon>
        <taxon>Eutheria</taxon>
        <taxon>Laurasiatheria</taxon>
        <taxon>Artiodactyla</taxon>
        <taxon>Ruminantia</taxon>
        <taxon>Pecora</taxon>
        <taxon>Bovidae</taxon>
        <taxon>Bovinae</taxon>
        <taxon>Bos</taxon>
    </lineage>
</organism>
<feature type="chain" id="PRO_0000299309" description="RILP-like protein 1">
    <location>
        <begin position="1"/>
        <end position="403"/>
    </location>
</feature>
<feature type="domain" description="RH1" evidence="6">
    <location>
        <begin position="10"/>
        <end position="97"/>
    </location>
</feature>
<feature type="domain" description="RH2" evidence="7">
    <location>
        <begin position="291"/>
        <end position="356"/>
    </location>
</feature>
<feature type="region of interest" description="Disordered" evidence="8">
    <location>
        <begin position="329"/>
        <end position="348"/>
    </location>
</feature>
<feature type="coiled-coil region" evidence="5">
    <location>
        <begin position="76"/>
        <end position="265"/>
    </location>
</feature>
<feature type="modified residue" description="Phosphoserine" evidence="2">
    <location>
        <position position="7"/>
    </location>
</feature>
<feature type="modified residue" description="S-nitrosocysteine" evidence="2">
    <location>
        <position position="47"/>
    </location>
</feature>
<dbReference type="EMBL" id="BC118379">
    <property type="protein sequence ID" value="AAI18380.1"/>
    <property type="molecule type" value="mRNA"/>
</dbReference>
<dbReference type="RefSeq" id="NP_001068694.1">
    <property type="nucleotide sequence ID" value="NM_001075226.1"/>
</dbReference>
<dbReference type="SMR" id="Q17QG3"/>
<dbReference type="FunCoup" id="Q17QG3">
    <property type="interactions" value="412"/>
</dbReference>
<dbReference type="STRING" id="9913.ENSBTAP00000066022"/>
<dbReference type="PaxDb" id="9913-ENSBTAP00000029666"/>
<dbReference type="GeneID" id="505840"/>
<dbReference type="KEGG" id="bta:505840"/>
<dbReference type="CTD" id="353116"/>
<dbReference type="eggNOG" id="ENOG502QR9G">
    <property type="taxonomic scope" value="Eukaryota"/>
</dbReference>
<dbReference type="InParanoid" id="Q17QG3"/>
<dbReference type="OrthoDB" id="10069524at2759"/>
<dbReference type="Proteomes" id="UP000009136">
    <property type="component" value="Unplaced"/>
</dbReference>
<dbReference type="GO" id="GO:0005814">
    <property type="term" value="C:centriole"/>
    <property type="evidence" value="ECO:0007669"/>
    <property type="project" value="UniProtKB-SubCell"/>
</dbReference>
<dbReference type="GO" id="GO:0005813">
    <property type="term" value="C:centrosome"/>
    <property type="evidence" value="ECO:0000250"/>
    <property type="project" value="UniProtKB"/>
</dbReference>
<dbReference type="GO" id="GO:0036064">
    <property type="term" value="C:ciliary basal body"/>
    <property type="evidence" value="ECO:0000318"/>
    <property type="project" value="GO_Central"/>
</dbReference>
<dbReference type="GO" id="GO:0005929">
    <property type="term" value="C:cilium"/>
    <property type="evidence" value="ECO:0000250"/>
    <property type="project" value="UniProtKB"/>
</dbReference>
<dbReference type="GO" id="GO:0005737">
    <property type="term" value="C:cytoplasm"/>
    <property type="evidence" value="ECO:0000318"/>
    <property type="project" value="GO_Central"/>
</dbReference>
<dbReference type="GO" id="GO:0005829">
    <property type="term" value="C:cytosol"/>
    <property type="evidence" value="ECO:0000250"/>
    <property type="project" value="UniProtKB"/>
</dbReference>
<dbReference type="GO" id="GO:0016020">
    <property type="term" value="C:membrane"/>
    <property type="evidence" value="ECO:0007669"/>
    <property type="project" value="GOC"/>
</dbReference>
<dbReference type="GO" id="GO:0051959">
    <property type="term" value="F:dynein light intermediate chain binding"/>
    <property type="evidence" value="ECO:0000318"/>
    <property type="project" value="GO_Central"/>
</dbReference>
<dbReference type="GO" id="GO:0046983">
    <property type="term" value="F:protein dimerization activity"/>
    <property type="evidence" value="ECO:0007669"/>
    <property type="project" value="InterPro"/>
</dbReference>
<dbReference type="GO" id="GO:0031267">
    <property type="term" value="F:small GTPase binding"/>
    <property type="evidence" value="ECO:0000318"/>
    <property type="project" value="GO_Central"/>
</dbReference>
<dbReference type="GO" id="GO:0060271">
    <property type="term" value="P:cilium assembly"/>
    <property type="evidence" value="ECO:0000318"/>
    <property type="project" value="GO_Central"/>
</dbReference>
<dbReference type="GO" id="GO:0003382">
    <property type="term" value="P:epithelial cell morphogenesis"/>
    <property type="evidence" value="ECO:0000250"/>
    <property type="project" value="UniProtKB"/>
</dbReference>
<dbReference type="GO" id="GO:0007263">
    <property type="term" value="P:nitric oxide mediated signal transduction"/>
    <property type="evidence" value="ECO:0000250"/>
    <property type="project" value="UniProtKB"/>
</dbReference>
<dbReference type="GO" id="GO:1903445">
    <property type="term" value="P:protein transport from ciliary membrane to plasma membrane"/>
    <property type="evidence" value="ECO:0000250"/>
    <property type="project" value="UniProtKB"/>
</dbReference>
<dbReference type="CDD" id="cd14445">
    <property type="entry name" value="RILP-like"/>
    <property type="match status" value="1"/>
</dbReference>
<dbReference type="FunFam" id="1.20.58.1770:FF:000002">
    <property type="entry name" value="RILP-like protein 1 isoform X1"/>
    <property type="match status" value="1"/>
</dbReference>
<dbReference type="Gene3D" id="1.20.58.1770">
    <property type="match status" value="1"/>
</dbReference>
<dbReference type="Gene3D" id="6.10.230.10">
    <property type="match status" value="1"/>
</dbReference>
<dbReference type="InterPro" id="IPR051241">
    <property type="entry name" value="DZIP_RILPL"/>
</dbReference>
<dbReference type="InterPro" id="IPR034743">
    <property type="entry name" value="RH1"/>
</dbReference>
<dbReference type="InterPro" id="IPR034744">
    <property type="entry name" value="RH2"/>
</dbReference>
<dbReference type="InterPro" id="IPR021563">
    <property type="entry name" value="RILP_dimer"/>
</dbReference>
<dbReference type="PANTHER" id="PTHR21502:SF6">
    <property type="entry name" value="RILP-LIKE PROTEIN 1"/>
    <property type="match status" value="1"/>
</dbReference>
<dbReference type="PANTHER" id="PTHR21502">
    <property type="entry name" value="ZINC FINGER PROTEIN DZIP1"/>
    <property type="match status" value="1"/>
</dbReference>
<dbReference type="Pfam" id="PF09744">
    <property type="entry name" value="RH1"/>
    <property type="match status" value="1"/>
</dbReference>
<dbReference type="Pfam" id="PF11461">
    <property type="entry name" value="RILP"/>
    <property type="match status" value="1"/>
</dbReference>
<dbReference type="SUPFAM" id="SSF161256">
    <property type="entry name" value="RILP dimerisation region"/>
    <property type="match status" value="1"/>
</dbReference>
<dbReference type="PROSITE" id="PS51776">
    <property type="entry name" value="RH1"/>
    <property type="match status" value="1"/>
</dbReference>
<dbReference type="PROSITE" id="PS51777">
    <property type="entry name" value="RH2"/>
    <property type="match status" value="1"/>
</dbReference>
<comment type="function">
    <text evidence="2 3 4">Plays a role in the regulation of cell shape and polarity (By similarity). Plays a role in cellular protein transport, including protein transport away from primary cilia (By similarity). Neuroprotective protein, which acts by sequestring GAPDH in the cytosol and prevent the apoptotic function of GAPDH in the nucleus (By similarity). Competes with SIAH1 for binding GAPDH (By similarity). Does not regulate lysosomal morphology and distribution (By similarity). Binds to RAB10 following LRRK2-mediated RAB10 phosphorylation which leads to inhibition of ciliogenesis (By similarity).</text>
</comment>
<comment type="subunit">
    <text evidence="2 3">Interacts (when S-nitrosylated) with GAPDH (By similarity). Interacts with RAB8A; interaction is dependent on the phosphorylation of 'Thr-72' of RAB8A (By similarity). Interacts with RAB10 and RAB12; the interaction is dependent on the phosphorylation of 'Thr-73' of RAB10, and 'Ser-105' of RAB12 (By similarity).</text>
</comment>
<comment type="subcellular location">
    <subcellularLocation>
        <location evidence="3">Cytoplasm</location>
        <location evidence="3">Cytosol</location>
    </subcellularLocation>
    <subcellularLocation>
        <location evidence="3">Cytoplasm</location>
        <location evidence="3">Cytoskeleton</location>
        <location evidence="3">Microtubule organizing center</location>
        <location evidence="3">Centrosome</location>
        <location evidence="3">Centriole</location>
    </subcellularLocation>
    <subcellularLocation>
        <location evidence="3">Cytoplasm</location>
        <location evidence="3">Cytoskeleton</location>
        <location evidence="3">Cilium basal body</location>
    </subcellularLocation>
</comment>
<comment type="PTM">
    <text evidence="1">S-nitrosylation is required for the interaction with GAPDH.</text>
</comment>
<comment type="similarity">
    <text evidence="9">Belongs to the RILPL family.</text>
</comment>
<accession>Q17QG3</accession>